<sequence length="238" mass="25020">MTTELHDDASGRLIVGLDVPTIAEAEKVVEELGNAVSFYKIGYQLVFAGGLDFAKSLVAARKKVFLDMKLLDIDNTIAKGVENVAKMGVSMLTLHAYPKAMRAAVEAARGSDLCLLGVTVLTSMDNADLREAGYSDNAETLVLKRARQAHEAGMGGIVASAVEAQAIRQAVGPDMAIVTPGIRPAGSEKGDQKRVMTPADALRAGASHLVVARPIVGAPDRKAAALAILKEMRSIGRS</sequence>
<accession>Q8FXW9</accession>
<accession>G0K976</accession>
<organism>
    <name type="scientific">Brucella suis biovar 1 (strain 1330)</name>
    <dbReference type="NCBI Taxonomy" id="204722"/>
    <lineage>
        <taxon>Bacteria</taxon>
        <taxon>Pseudomonadati</taxon>
        <taxon>Pseudomonadota</taxon>
        <taxon>Alphaproteobacteria</taxon>
        <taxon>Hyphomicrobiales</taxon>
        <taxon>Brucellaceae</taxon>
        <taxon>Brucella/Ochrobactrum group</taxon>
        <taxon>Brucella</taxon>
    </lineage>
</organism>
<name>PYRF_BRUSU</name>
<gene>
    <name evidence="1" type="primary">pyrF</name>
    <name type="ordered locus">BR2128</name>
    <name type="ordered locus">BS1330_I2122</name>
</gene>
<evidence type="ECO:0000255" key="1">
    <source>
        <dbReference type="HAMAP-Rule" id="MF_01200"/>
    </source>
</evidence>
<dbReference type="EC" id="4.1.1.23" evidence="1"/>
<dbReference type="EMBL" id="AE014291">
    <property type="protein sequence ID" value="AAN31018.1"/>
    <property type="molecule type" value="Genomic_DNA"/>
</dbReference>
<dbReference type="EMBL" id="CP002997">
    <property type="protein sequence ID" value="AEM19435.1"/>
    <property type="molecule type" value="Genomic_DNA"/>
</dbReference>
<dbReference type="RefSeq" id="WP_004689341.1">
    <property type="nucleotide sequence ID" value="NZ_KN046804.1"/>
</dbReference>
<dbReference type="SMR" id="Q8FXW9"/>
<dbReference type="GeneID" id="97534614"/>
<dbReference type="KEGG" id="bms:BR2128"/>
<dbReference type="KEGG" id="bsi:BS1330_I2122"/>
<dbReference type="PATRIC" id="fig|204722.22.peg.1887"/>
<dbReference type="HOGENOM" id="CLU_067069_1_0_5"/>
<dbReference type="PhylomeDB" id="Q8FXW9"/>
<dbReference type="UniPathway" id="UPA00070">
    <property type="reaction ID" value="UER00120"/>
</dbReference>
<dbReference type="Proteomes" id="UP000007104">
    <property type="component" value="Chromosome I"/>
</dbReference>
<dbReference type="GO" id="GO:0005829">
    <property type="term" value="C:cytosol"/>
    <property type="evidence" value="ECO:0007669"/>
    <property type="project" value="TreeGrafter"/>
</dbReference>
<dbReference type="GO" id="GO:0004590">
    <property type="term" value="F:orotidine-5'-phosphate decarboxylase activity"/>
    <property type="evidence" value="ECO:0007669"/>
    <property type="project" value="UniProtKB-UniRule"/>
</dbReference>
<dbReference type="GO" id="GO:0006207">
    <property type="term" value="P:'de novo' pyrimidine nucleobase biosynthetic process"/>
    <property type="evidence" value="ECO:0007669"/>
    <property type="project" value="InterPro"/>
</dbReference>
<dbReference type="GO" id="GO:0044205">
    <property type="term" value="P:'de novo' UMP biosynthetic process"/>
    <property type="evidence" value="ECO:0007669"/>
    <property type="project" value="UniProtKB-UniRule"/>
</dbReference>
<dbReference type="CDD" id="cd04725">
    <property type="entry name" value="OMP_decarboxylase_like"/>
    <property type="match status" value="1"/>
</dbReference>
<dbReference type="Gene3D" id="3.20.20.70">
    <property type="entry name" value="Aldolase class I"/>
    <property type="match status" value="1"/>
</dbReference>
<dbReference type="HAMAP" id="MF_01200_B">
    <property type="entry name" value="OMPdecase_type1_B"/>
    <property type="match status" value="1"/>
</dbReference>
<dbReference type="InterPro" id="IPR013785">
    <property type="entry name" value="Aldolase_TIM"/>
</dbReference>
<dbReference type="InterPro" id="IPR014732">
    <property type="entry name" value="OMPdecase"/>
</dbReference>
<dbReference type="InterPro" id="IPR018089">
    <property type="entry name" value="OMPdecase_AS"/>
</dbReference>
<dbReference type="InterPro" id="IPR047596">
    <property type="entry name" value="OMPdecase_bac"/>
</dbReference>
<dbReference type="InterPro" id="IPR001754">
    <property type="entry name" value="OMPdeCOase_dom"/>
</dbReference>
<dbReference type="InterPro" id="IPR011060">
    <property type="entry name" value="RibuloseP-bd_barrel"/>
</dbReference>
<dbReference type="NCBIfam" id="NF001273">
    <property type="entry name" value="PRK00230.1"/>
    <property type="match status" value="1"/>
</dbReference>
<dbReference type="NCBIfam" id="TIGR01740">
    <property type="entry name" value="pyrF"/>
    <property type="match status" value="1"/>
</dbReference>
<dbReference type="PANTHER" id="PTHR32119">
    <property type="entry name" value="OROTIDINE 5'-PHOSPHATE DECARBOXYLASE"/>
    <property type="match status" value="1"/>
</dbReference>
<dbReference type="PANTHER" id="PTHR32119:SF2">
    <property type="entry name" value="OROTIDINE 5'-PHOSPHATE DECARBOXYLASE"/>
    <property type="match status" value="1"/>
</dbReference>
<dbReference type="Pfam" id="PF00215">
    <property type="entry name" value="OMPdecase"/>
    <property type="match status" value="1"/>
</dbReference>
<dbReference type="SMART" id="SM00934">
    <property type="entry name" value="OMPdecase"/>
    <property type="match status" value="1"/>
</dbReference>
<dbReference type="SUPFAM" id="SSF51366">
    <property type="entry name" value="Ribulose-phoshate binding barrel"/>
    <property type="match status" value="1"/>
</dbReference>
<dbReference type="PROSITE" id="PS00156">
    <property type="entry name" value="OMPDECASE"/>
    <property type="match status" value="1"/>
</dbReference>
<comment type="function">
    <text evidence="1">Catalyzes the decarboxylation of orotidine 5'-monophosphate (OMP) to uridine 5'-monophosphate (UMP).</text>
</comment>
<comment type="catalytic activity">
    <reaction evidence="1">
        <text>orotidine 5'-phosphate + H(+) = UMP + CO2</text>
        <dbReference type="Rhea" id="RHEA:11596"/>
        <dbReference type="ChEBI" id="CHEBI:15378"/>
        <dbReference type="ChEBI" id="CHEBI:16526"/>
        <dbReference type="ChEBI" id="CHEBI:57538"/>
        <dbReference type="ChEBI" id="CHEBI:57865"/>
        <dbReference type="EC" id="4.1.1.23"/>
    </reaction>
</comment>
<comment type="pathway">
    <text evidence="1">Pyrimidine metabolism; UMP biosynthesis via de novo pathway; UMP from orotate: step 2/2.</text>
</comment>
<comment type="subunit">
    <text evidence="1">Homodimer.</text>
</comment>
<comment type="similarity">
    <text evidence="1">Belongs to the OMP decarboxylase family. Type 1 subfamily.</text>
</comment>
<feature type="chain" id="PRO_0000134531" description="Orotidine 5'-phosphate decarboxylase">
    <location>
        <begin position="1"/>
        <end position="238"/>
    </location>
</feature>
<feature type="active site" description="Proton donor" evidence="1">
    <location>
        <position position="69"/>
    </location>
</feature>
<feature type="binding site" evidence="1">
    <location>
        <position position="18"/>
    </location>
    <ligand>
        <name>substrate</name>
    </ligand>
</feature>
<feature type="binding site" evidence="1">
    <location>
        <position position="40"/>
    </location>
    <ligand>
        <name>substrate</name>
    </ligand>
</feature>
<feature type="binding site" evidence="1">
    <location>
        <begin position="67"/>
        <end position="76"/>
    </location>
    <ligand>
        <name>substrate</name>
    </ligand>
</feature>
<feature type="binding site" evidence="1">
    <location>
        <position position="122"/>
    </location>
    <ligand>
        <name>substrate</name>
    </ligand>
</feature>
<feature type="binding site" evidence="1">
    <location>
        <position position="183"/>
    </location>
    <ligand>
        <name>substrate</name>
    </ligand>
</feature>
<feature type="binding site" evidence="1">
    <location>
        <position position="192"/>
    </location>
    <ligand>
        <name>substrate</name>
    </ligand>
</feature>
<feature type="binding site" evidence="1">
    <location>
        <position position="213"/>
    </location>
    <ligand>
        <name>substrate</name>
    </ligand>
</feature>
<proteinExistence type="inferred from homology"/>
<reference key="1">
    <citation type="journal article" date="2002" name="Proc. Natl. Acad. Sci. U.S.A.">
        <title>The Brucella suis genome reveals fundamental similarities between animal and plant pathogens and symbionts.</title>
        <authorList>
            <person name="Paulsen I.T."/>
            <person name="Seshadri R."/>
            <person name="Nelson K.E."/>
            <person name="Eisen J.A."/>
            <person name="Heidelberg J.F."/>
            <person name="Read T.D."/>
            <person name="Dodson R.J."/>
            <person name="Umayam L.A."/>
            <person name="Brinkac L.M."/>
            <person name="Beanan M.J."/>
            <person name="Daugherty S.C."/>
            <person name="DeBoy R.T."/>
            <person name="Durkin A.S."/>
            <person name="Kolonay J.F."/>
            <person name="Madupu R."/>
            <person name="Nelson W.C."/>
            <person name="Ayodeji B."/>
            <person name="Kraul M."/>
            <person name="Shetty J."/>
            <person name="Malek J.A."/>
            <person name="Van Aken S.E."/>
            <person name="Riedmuller S."/>
            <person name="Tettelin H."/>
            <person name="Gill S.R."/>
            <person name="White O."/>
            <person name="Salzberg S.L."/>
            <person name="Hoover D.L."/>
            <person name="Lindler L.E."/>
            <person name="Halling S.M."/>
            <person name="Boyle S.M."/>
            <person name="Fraser C.M."/>
        </authorList>
    </citation>
    <scope>NUCLEOTIDE SEQUENCE [LARGE SCALE GENOMIC DNA]</scope>
    <source>
        <strain>1330</strain>
    </source>
</reference>
<reference key="2">
    <citation type="journal article" date="2011" name="J. Bacteriol.">
        <title>Revised genome sequence of Brucella suis 1330.</title>
        <authorList>
            <person name="Tae H."/>
            <person name="Shallom S."/>
            <person name="Settlage R."/>
            <person name="Preston D."/>
            <person name="Adams L.G."/>
            <person name="Garner H.R."/>
        </authorList>
    </citation>
    <scope>NUCLEOTIDE SEQUENCE [LARGE SCALE GENOMIC DNA]</scope>
    <source>
        <strain>1330</strain>
    </source>
</reference>
<protein>
    <recommendedName>
        <fullName evidence="1">Orotidine 5'-phosphate decarboxylase</fullName>
        <ecNumber evidence="1">4.1.1.23</ecNumber>
    </recommendedName>
    <alternativeName>
        <fullName evidence="1">OMP decarboxylase</fullName>
        <shortName evidence="1">OMPDCase</shortName>
        <shortName evidence="1">OMPdecase</shortName>
    </alternativeName>
</protein>
<keyword id="KW-0210">Decarboxylase</keyword>
<keyword id="KW-0456">Lyase</keyword>
<keyword id="KW-0665">Pyrimidine biosynthesis</keyword>